<keyword id="KW-1035">Host cytoplasm</keyword>
<keyword id="KW-0945">Host-virus interaction</keyword>
<keyword id="KW-0378">Hydrolase</keyword>
<keyword id="KW-1090">Inhibition of host innate immune response by virus</keyword>
<keyword id="KW-1114">Inhibition of host interferon signaling pathway by virus</keyword>
<keyword id="KW-1105">Inhibition of host STAT1 by virus</keyword>
<keyword id="KW-0922">Interferon antiviral system evasion</keyword>
<keyword id="KW-0426">Late protein</keyword>
<keyword id="KW-0904">Protein phosphatase</keyword>
<keyword id="KW-0899">Viral immunoevasion</keyword>
<keyword id="KW-0946">Virion</keyword>
<feature type="chain" id="PRO_0000448116" description="Dual specificity protein phosphatase H1">
    <location>
        <begin position="1"/>
        <end position="171"/>
    </location>
</feature>
<feature type="domain" description="Tyrosine-protein phosphatase" evidence="2">
    <location>
        <begin position="23"/>
        <end position="171"/>
    </location>
</feature>
<feature type="active site" description="Phosphocysteine intermediate" evidence="2">
    <location>
        <position position="110"/>
    </location>
</feature>
<sequence>MDKKSLYKYLLLRSTGDMRRAKSPTIMTRVTNNVYLGNYKNAMNAPSSEVKFKYVLNLTMDKYTLPNSNINIIHIPLVDDTTTDISKYFDDVTAFLSKCDQRNEPVLVHCVAGVNRSGAMILAYLMSKNKESSPMLYFLYVYHSMRDLRGAFVENPSFKRQIIEKYVIDKN</sequence>
<gene>
    <name type="ORF">H1L</name>
    <name type="ORF">I1L</name>
</gene>
<dbReference type="EC" id="3.1.3.-"/>
<dbReference type="EC" id="3.1.3.48"/>
<dbReference type="EMBL" id="L22579">
    <property type="protein sequence ID" value="AAA60832.1"/>
    <property type="molecule type" value="Genomic_DNA"/>
</dbReference>
<dbReference type="EMBL" id="X76264">
    <property type="protein sequence ID" value="CAA53838.1"/>
    <property type="molecule type" value="Genomic_DNA"/>
</dbReference>
<dbReference type="PIR" id="B72161">
    <property type="entry name" value="B72161"/>
</dbReference>
<dbReference type="PIR" id="T28522">
    <property type="entry name" value="T28522"/>
</dbReference>
<dbReference type="RefSeq" id="NP_042128.1">
    <property type="nucleotide sequence ID" value="NC_001611.1"/>
</dbReference>
<dbReference type="SMR" id="P0DOQ6"/>
<dbReference type="GeneID" id="1486439"/>
<dbReference type="KEGG" id="vg:1486439"/>
<dbReference type="SABIO-RK" id="P0DOQ6"/>
<dbReference type="Proteomes" id="UP000119805">
    <property type="component" value="Segment"/>
</dbReference>
<dbReference type="GO" id="GO:0030430">
    <property type="term" value="C:host cell cytoplasm"/>
    <property type="evidence" value="ECO:0007669"/>
    <property type="project" value="UniProtKB-SubCell"/>
</dbReference>
<dbReference type="GO" id="GO:0044423">
    <property type="term" value="C:virion component"/>
    <property type="evidence" value="ECO:0007669"/>
    <property type="project" value="UniProtKB-KW"/>
</dbReference>
<dbReference type="GO" id="GO:0004722">
    <property type="term" value="F:protein serine/threonine phosphatase activity"/>
    <property type="evidence" value="ECO:0007669"/>
    <property type="project" value="RHEA"/>
</dbReference>
<dbReference type="GO" id="GO:0004725">
    <property type="term" value="F:protein tyrosine phosphatase activity"/>
    <property type="evidence" value="ECO:0007669"/>
    <property type="project" value="UniProtKB-EC"/>
</dbReference>
<dbReference type="GO" id="GO:0043409">
    <property type="term" value="P:negative regulation of MAPK cascade"/>
    <property type="evidence" value="ECO:0007669"/>
    <property type="project" value="TreeGrafter"/>
</dbReference>
<dbReference type="GO" id="GO:0052170">
    <property type="term" value="P:symbiont-mediated suppression of host innate immune response"/>
    <property type="evidence" value="ECO:0007669"/>
    <property type="project" value="UniProtKB-KW"/>
</dbReference>
<dbReference type="GO" id="GO:0039563">
    <property type="term" value="P:symbiont-mediated suppression of host JAK-STAT cascade via inhibition of STAT1 activity"/>
    <property type="evidence" value="ECO:0007669"/>
    <property type="project" value="UniProtKB-KW"/>
</dbReference>
<dbReference type="GO" id="GO:0039502">
    <property type="term" value="P:symbiont-mediated suppression of host type I interferon-mediated signaling pathway"/>
    <property type="evidence" value="ECO:0007669"/>
    <property type="project" value="UniProtKB-KW"/>
</dbReference>
<dbReference type="CDD" id="cd14498">
    <property type="entry name" value="DSP"/>
    <property type="match status" value="1"/>
</dbReference>
<dbReference type="Gene3D" id="3.90.190.10">
    <property type="entry name" value="Protein tyrosine phosphatase superfamily"/>
    <property type="match status" value="1"/>
</dbReference>
<dbReference type="InterPro" id="IPR000340">
    <property type="entry name" value="Dual-sp_phosphatase_cat-dom"/>
</dbReference>
<dbReference type="InterPro" id="IPR029021">
    <property type="entry name" value="Prot-tyrosine_phosphatase-like"/>
</dbReference>
<dbReference type="InterPro" id="IPR016130">
    <property type="entry name" value="Tyr_Pase_AS"/>
</dbReference>
<dbReference type="InterPro" id="IPR003595">
    <property type="entry name" value="Tyr_Pase_cat"/>
</dbReference>
<dbReference type="InterPro" id="IPR000387">
    <property type="entry name" value="Tyr_Pase_dom"/>
</dbReference>
<dbReference type="InterPro" id="IPR020422">
    <property type="entry name" value="TYR_PHOSPHATASE_DUAL_dom"/>
</dbReference>
<dbReference type="PANTHER" id="PTHR10159">
    <property type="entry name" value="DUAL SPECIFICITY PROTEIN PHOSPHATASE"/>
    <property type="match status" value="1"/>
</dbReference>
<dbReference type="PANTHER" id="PTHR10159:SF519">
    <property type="entry name" value="DUAL SPECIFICITY PROTEIN PHOSPHATASE MPK3"/>
    <property type="match status" value="1"/>
</dbReference>
<dbReference type="Pfam" id="PF00782">
    <property type="entry name" value="DSPc"/>
    <property type="match status" value="1"/>
</dbReference>
<dbReference type="SMART" id="SM00195">
    <property type="entry name" value="DSPc"/>
    <property type="match status" value="1"/>
</dbReference>
<dbReference type="SMART" id="SM00404">
    <property type="entry name" value="PTPc_motif"/>
    <property type="match status" value="1"/>
</dbReference>
<dbReference type="SUPFAM" id="SSF52799">
    <property type="entry name" value="(Phosphotyrosine protein) phosphatases II"/>
    <property type="match status" value="1"/>
</dbReference>
<dbReference type="PROSITE" id="PS00383">
    <property type="entry name" value="TYR_PHOSPHATASE_1"/>
    <property type="match status" value="1"/>
</dbReference>
<dbReference type="PROSITE" id="PS50056">
    <property type="entry name" value="TYR_PHOSPHATASE_2"/>
    <property type="match status" value="1"/>
</dbReference>
<dbReference type="PROSITE" id="PS50054">
    <property type="entry name" value="TYR_PHOSPHATASE_DUAL"/>
    <property type="match status" value="1"/>
</dbReference>
<organismHost>
    <name type="scientific">Homo sapiens</name>
    <name type="common">Human</name>
    <dbReference type="NCBI Taxonomy" id="9606"/>
</organismHost>
<protein>
    <recommendedName>
        <fullName>Dual specificity protein phosphatase H1</fullName>
        <ecNumber>3.1.3.-</ecNumber>
        <ecNumber>3.1.3.48</ecNumber>
    </recommendedName>
    <alternativeName>
        <fullName>Late protein H1</fullName>
    </alternativeName>
</protein>
<proteinExistence type="evidence at transcript level"/>
<accession>P0DOQ6</accession>
<accession>P33064</accession>
<name>DUSP_VARV</name>
<organism>
    <name type="scientific">Variola virus</name>
    <dbReference type="NCBI Taxonomy" id="10255"/>
    <lineage>
        <taxon>Viruses</taxon>
        <taxon>Varidnaviria</taxon>
        <taxon>Bamfordvirae</taxon>
        <taxon>Nucleocytoviricota</taxon>
        <taxon>Pokkesviricetes</taxon>
        <taxon>Chitovirales</taxon>
        <taxon>Poxviridae</taxon>
        <taxon>Chordopoxvirinae</taxon>
        <taxon>Orthopoxvirus</taxon>
    </lineage>
</organism>
<comment type="function">
    <text evidence="1">Serine/Tyrosine phosphatase which down-regulates cellular antiviral response by dephosphorylating activated host STAT1 and blocking interferon (IFN)-stimulated innate immune responses. Dephosphorylates the A17 protein (By similarity).</text>
</comment>
<comment type="catalytic activity">
    <reaction evidence="3">
        <text>O-phospho-L-tyrosyl-[protein] + H2O = L-tyrosyl-[protein] + phosphate</text>
        <dbReference type="Rhea" id="RHEA:10684"/>
        <dbReference type="Rhea" id="RHEA-COMP:10136"/>
        <dbReference type="Rhea" id="RHEA-COMP:20101"/>
        <dbReference type="ChEBI" id="CHEBI:15377"/>
        <dbReference type="ChEBI" id="CHEBI:43474"/>
        <dbReference type="ChEBI" id="CHEBI:46858"/>
        <dbReference type="ChEBI" id="CHEBI:61978"/>
        <dbReference type="EC" id="3.1.3.48"/>
    </reaction>
</comment>
<comment type="catalytic activity">
    <reaction>
        <text>O-phospho-L-seryl-[protein] + H2O = L-seryl-[protein] + phosphate</text>
        <dbReference type="Rhea" id="RHEA:20629"/>
        <dbReference type="Rhea" id="RHEA-COMP:9863"/>
        <dbReference type="Rhea" id="RHEA-COMP:11604"/>
        <dbReference type="ChEBI" id="CHEBI:15377"/>
        <dbReference type="ChEBI" id="CHEBI:29999"/>
        <dbReference type="ChEBI" id="CHEBI:43474"/>
        <dbReference type="ChEBI" id="CHEBI:83421"/>
    </reaction>
</comment>
<comment type="subunit">
    <text evidence="1">Homodimer.</text>
</comment>
<comment type="subcellular location">
    <subcellularLocation>
        <location evidence="1">Virion</location>
    </subcellularLocation>
    <subcellularLocation>
        <location evidence="1">Host cytoplasm</location>
    </subcellularLocation>
    <text evidence="1">Approximately 200 molecules of H1 are packaged within the virion and are essential for the viability of the virus.</text>
</comment>
<comment type="induction">
    <text>Expressed in the late phase of the viral replicative cycle.</text>
</comment>
<comment type="similarity">
    <text evidence="4">Belongs to the protein-tyrosine phosphatase family. Non-receptor class dual specificity subfamily.</text>
</comment>
<reference key="1">
    <citation type="journal article" date="1993" name="Nature">
        <title>Potential virulence determinants in terminal regions of variola smallpox virus genome.</title>
        <authorList>
            <person name="Massung R.F."/>
            <person name="Esposito J.J."/>
            <person name="Liu L.I."/>
            <person name="Qi J."/>
            <person name="Utterback T.R."/>
            <person name="Knight J.C."/>
            <person name="Aubin L."/>
            <person name="Yuran T.E."/>
            <person name="Parsons J.M."/>
            <person name="Loparev V.N."/>
            <person name="Selivanov N.A."/>
            <person name="Cavallaro K.F."/>
            <person name="Kerlavage A.R."/>
            <person name="Mahy B.W.J."/>
            <person name="Venter J.C."/>
        </authorList>
    </citation>
    <scope>NUCLEOTIDE SEQUENCE [GENOMIC DNA]</scope>
    <source>
        <strain>Bangladesh-1975</strain>
    </source>
</reference>
<reference key="2">
    <citation type="submission" date="1995-12" db="EMBL/GenBank/DDBJ databases">
        <authorList>
            <person name="Shchelkunov S.N."/>
            <person name="Balkin I.V."/>
            <person name="Totmenin A.V."/>
            <person name="Resenchuk S.M."/>
            <person name="Blinov V.M."/>
            <person name="Sandakhchiev L.S."/>
        </authorList>
    </citation>
    <scope>NUCLEOTIDE SEQUENCE [GENOMIC DNA]</scope>
    <source>
        <strain>Garcia-1966</strain>
    </source>
</reference>
<evidence type="ECO:0000250" key="1"/>
<evidence type="ECO:0000255" key="2">
    <source>
        <dbReference type="PROSITE-ProRule" id="PRU00160"/>
    </source>
</evidence>
<evidence type="ECO:0000255" key="3">
    <source>
        <dbReference type="PROSITE-ProRule" id="PRU10044"/>
    </source>
</evidence>
<evidence type="ECO:0000305" key="4"/>